<dbReference type="EC" id="4.2.1.9" evidence="2"/>
<dbReference type="EMBL" id="L06666">
    <property type="protein sequence ID" value="AAC41395.1"/>
    <property type="molecule type" value="Genomic_DNA"/>
</dbReference>
<dbReference type="SMR" id="P31959"/>
<dbReference type="UniPathway" id="UPA00047">
    <property type="reaction ID" value="UER00057"/>
</dbReference>
<dbReference type="UniPathway" id="UPA00049">
    <property type="reaction ID" value="UER00061"/>
</dbReference>
<dbReference type="GO" id="GO:0005829">
    <property type="term" value="C:cytosol"/>
    <property type="evidence" value="ECO:0007669"/>
    <property type="project" value="TreeGrafter"/>
</dbReference>
<dbReference type="GO" id="GO:0051537">
    <property type="term" value="F:2 iron, 2 sulfur cluster binding"/>
    <property type="evidence" value="ECO:0007669"/>
    <property type="project" value="UniProtKB-KW"/>
</dbReference>
<dbReference type="GO" id="GO:0004160">
    <property type="term" value="F:dihydroxy-acid dehydratase activity"/>
    <property type="evidence" value="ECO:0007669"/>
    <property type="project" value="UniProtKB-EC"/>
</dbReference>
<dbReference type="GO" id="GO:0046872">
    <property type="term" value="F:metal ion binding"/>
    <property type="evidence" value="ECO:0007669"/>
    <property type="project" value="UniProtKB-KW"/>
</dbReference>
<dbReference type="GO" id="GO:0009097">
    <property type="term" value="P:isoleucine biosynthetic process"/>
    <property type="evidence" value="ECO:0007669"/>
    <property type="project" value="UniProtKB-UniPathway"/>
</dbReference>
<dbReference type="GO" id="GO:0009099">
    <property type="term" value="P:L-valine biosynthetic process"/>
    <property type="evidence" value="ECO:0007669"/>
    <property type="project" value="UniProtKB-UniPathway"/>
</dbReference>
<dbReference type="InterPro" id="IPR020558">
    <property type="entry name" value="DiOHA_6PGluconate_deHydtase_CS"/>
</dbReference>
<dbReference type="InterPro" id="IPR000581">
    <property type="entry name" value="ILV_EDD_N"/>
</dbReference>
<dbReference type="InterPro" id="IPR037237">
    <property type="entry name" value="IlvD/EDD_N"/>
</dbReference>
<dbReference type="PANTHER" id="PTHR43661">
    <property type="entry name" value="D-XYLONATE DEHYDRATASE"/>
    <property type="match status" value="1"/>
</dbReference>
<dbReference type="PANTHER" id="PTHR43661:SF3">
    <property type="entry name" value="D-XYLONATE DEHYDRATASE YAGF-RELATED"/>
    <property type="match status" value="1"/>
</dbReference>
<dbReference type="Pfam" id="PF00920">
    <property type="entry name" value="ILVD_EDD_N"/>
    <property type="match status" value="1"/>
</dbReference>
<dbReference type="SUPFAM" id="SSF143975">
    <property type="entry name" value="IlvD/EDD N-terminal domain-like"/>
    <property type="match status" value="1"/>
</dbReference>
<dbReference type="PROSITE" id="PS00886">
    <property type="entry name" value="ILVD_EDD_1"/>
    <property type="match status" value="1"/>
</dbReference>
<reference key="1">
    <citation type="journal article" date="1993" name="DNA Seq.">
        <title>The nucleotide sequence of genes involved in the leucine biosynthetic pathway of Clostridium pasteurianum.</title>
        <authorList>
            <person name="Oultram J.D."/>
            <person name="Loughlin M."/>
            <person name="Walmsley R.W."/>
            <person name="Gunnery S.M."/>
            <person name="Minton N.P."/>
        </authorList>
    </citation>
    <scope>NUCLEOTIDE SEQUENCE [GENOMIC DNA]</scope>
</reference>
<feature type="chain" id="PRO_0000103460" description="Dihydroxy-acid dehydratase">
    <location>
        <begin position="1"/>
        <end position="286" status="greater than"/>
    </location>
</feature>
<feature type="binding site" evidence="2">
    <location>
        <position position="78"/>
    </location>
    <ligand>
        <name>Mg(2+)</name>
        <dbReference type="ChEBI" id="CHEBI:18420"/>
    </ligand>
</feature>
<feature type="binding site" evidence="2">
    <location>
        <position position="119"/>
    </location>
    <ligand>
        <name>[2Fe-2S] cluster</name>
        <dbReference type="ChEBI" id="CHEBI:190135"/>
    </ligand>
</feature>
<feature type="binding site" evidence="2">
    <location>
        <position position="120"/>
    </location>
    <ligand>
        <name>Mg(2+)</name>
        <dbReference type="ChEBI" id="CHEBI:18420"/>
    </ligand>
</feature>
<feature type="binding site" description="via carbamate group" evidence="2">
    <location>
        <position position="121"/>
    </location>
    <ligand>
        <name>Mg(2+)</name>
        <dbReference type="ChEBI" id="CHEBI:18420"/>
    </ligand>
</feature>
<feature type="binding site" evidence="2">
    <location>
        <position position="191"/>
    </location>
    <ligand>
        <name>[2Fe-2S] cluster</name>
        <dbReference type="ChEBI" id="CHEBI:190135"/>
    </ligand>
</feature>
<feature type="modified residue" description="N6-carboxylysine" evidence="2">
    <location>
        <position position="121"/>
    </location>
</feature>
<feature type="non-terminal residue">
    <location>
        <position position="286"/>
    </location>
</feature>
<organism>
    <name type="scientific">Clostridium pasteurianum</name>
    <dbReference type="NCBI Taxonomy" id="1501"/>
    <lineage>
        <taxon>Bacteria</taxon>
        <taxon>Bacillati</taxon>
        <taxon>Bacillota</taxon>
        <taxon>Clostridia</taxon>
        <taxon>Eubacteriales</taxon>
        <taxon>Clostridiaceae</taxon>
        <taxon>Clostridium</taxon>
    </lineage>
</organism>
<protein>
    <recommendedName>
        <fullName>Dihydroxy-acid dehydratase</fullName>
        <shortName>DAD</shortName>
        <ecNumber evidence="2">4.2.1.9</ecNumber>
    </recommendedName>
</protein>
<comment type="function">
    <text evidence="2">Functions in the biosynthesis of branched-chain amino acids. Catalyzes the dehydration of (2R,3R)-2,3-dihydroxy-3-methylpentanoate (2,3-dihydroxy-3-methylvalerate) into 2-oxo-3-methylpentanoate (2-oxo-3-methylvalerate) and of (2R)-2,3-dihydroxy-3-methylbutanoate (2,3-dihydroxyisovalerate) into 2-oxo-3-methylbutanoate (2-oxoisovalerate), the penultimate precursor to L-isoleucine and L-valine, respectively. Is specific for the (R) isomer of 2,3-dihydroxy-3-methylbutanoate, with no catalytic activity against the (S) isomer.</text>
</comment>
<comment type="catalytic activity">
    <reaction evidence="2">
        <text>(2R)-2,3-dihydroxy-3-methylbutanoate = 3-methyl-2-oxobutanoate + H2O</text>
        <dbReference type="Rhea" id="RHEA:24809"/>
        <dbReference type="ChEBI" id="CHEBI:11851"/>
        <dbReference type="ChEBI" id="CHEBI:15377"/>
        <dbReference type="ChEBI" id="CHEBI:49072"/>
        <dbReference type="EC" id="4.2.1.9"/>
    </reaction>
    <physiologicalReaction direction="left-to-right" evidence="2">
        <dbReference type="Rhea" id="RHEA:24810"/>
    </physiologicalReaction>
</comment>
<comment type="catalytic activity">
    <reaction evidence="1">
        <text>(2R,3R)-2,3-dihydroxy-3-methylpentanoate = (S)-3-methyl-2-oxopentanoate + H2O</text>
        <dbReference type="Rhea" id="RHEA:27694"/>
        <dbReference type="ChEBI" id="CHEBI:15377"/>
        <dbReference type="ChEBI" id="CHEBI:35146"/>
        <dbReference type="ChEBI" id="CHEBI:49258"/>
        <dbReference type="EC" id="4.2.1.9"/>
    </reaction>
    <physiologicalReaction direction="left-to-right" evidence="1">
        <dbReference type="Rhea" id="RHEA:27695"/>
    </physiologicalReaction>
</comment>
<comment type="cofactor">
    <cofactor evidence="2">
        <name>[2Fe-2S] cluster</name>
        <dbReference type="ChEBI" id="CHEBI:190135"/>
    </cofactor>
    <text evidence="2">Binds 1 [2Fe-2S] cluster per subunit. This cluster acts as a Lewis acid cofactor.</text>
</comment>
<comment type="cofactor">
    <cofactor evidence="2">
        <name>Mg(2+)</name>
        <dbReference type="ChEBI" id="CHEBI:18420"/>
    </cofactor>
</comment>
<comment type="pathway">
    <text evidence="2">Amino-acid biosynthesis; L-isoleucine biosynthesis; L-isoleucine from 2-oxobutanoate: step 3/4.</text>
</comment>
<comment type="pathway">
    <text evidence="2">Amino-acid biosynthesis; L-valine biosynthesis; L-valine from pyruvate: step 3/4.</text>
</comment>
<comment type="subunit">
    <text evidence="2">Homodimer.</text>
</comment>
<comment type="similarity">
    <text evidence="3">Belongs to the IlvD/Edd family.</text>
</comment>
<sequence length="286" mass="29926">MRSDSARKGLEKAPHRSLFKALGFIDEEMERPLIGIASSYSEIIPGHMNLDKVVQAVKDGVRMAGGVPVTFGTIGVCDGISMNHKGMSYSLPSRQLIADSVEIVASAHAFDGIVLVPNCDKVVPGMMMAAARLDIPAIVISGGPMLAGNTCGKATDLSGVFEAVGAVKAGNMTEEELSELENTACPTCGSCSGMYTANSMNCLSEVLGLALPYNGTIPAVYSERLRLAKTSGMKIVDLVKKGLTPSKILTEEAFMNAITADMALGCSTNSLLHLPAIANEVGITID</sequence>
<accession>P31959</accession>
<keyword id="KW-0001">2Fe-2S</keyword>
<keyword id="KW-0028">Amino-acid biosynthesis</keyword>
<keyword id="KW-0100">Branched-chain amino acid biosynthesis</keyword>
<keyword id="KW-0408">Iron</keyword>
<keyword id="KW-0411">Iron-sulfur</keyword>
<keyword id="KW-0456">Lyase</keyword>
<keyword id="KW-0460">Magnesium</keyword>
<keyword id="KW-0479">Metal-binding</keyword>
<proteinExistence type="inferred from homology"/>
<name>ILVD_CLOPA</name>
<gene>
    <name type="primary">ilvD</name>
</gene>
<evidence type="ECO:0000250" key="1">
    <source>
        <dbReference type="UniProtKB" id="P05791"/>
    </source>
</evidence>
<evidence type="ECO:0000250" key="2">
    <source>
        <dbReference type="UniProtKB" id="P9WKJ5"/>
    </source>
</evidence>
<evidence type="ECO:0000305" key="3"/>